<name>CHLL_CHAGL</name>
<reference key="1">
    <citation type="journal article" date="2002" name="Proc. Natl. Acad. Sci. U.S.A.">
        <title>The chloroplast and mitochondrial genome sequences of the charophyte Chaetosphaeridium globosum: insights into the timing of the events that restructured organelle DNAs within the green algal lineage that led to land plants.</title>
        <authorList>
            <person name="Turmel M."/>
            <person name="Otis C."/>
            <person name="Lemieux C."/>
        </authorList>
    </citation>
    <scope>NUCLEOTIDE SEQUENCE [LARGE SCALE GENOMIC DNA]</scope>
    <source>
        <strain>M1311</strain>
    </source>
</reference>
<sequence>MKIAVYGKGGIGKSTTSCNISIALARRGKRVLQIGCDPKHDSTFTLTGFLIPTIIDTLQSKDYHYEDVWPEDVIYKGYGGVDCVEAGGPPAGAGCGGYVVGETVKLLKELNAFYEYDVILFDVLGDVVCGGFAAPLNYADYCIIITDNGFDALFAANRIAASVREKARTHPLRLAGLVGNRTSKRDLIDKYVEACPMPVLEVLPLIEDIRVSRVKGKTLFEMAESQESLNYVCDFYLNIADQILSCPEGVVPKEVPDRELFSLLSDFYLNPTLSEKENTLSPSSLDFMMV</sequence>
<gene>
    <name evidence="1" type="primary">chlL-A</name>
    <name type="synonym">chlL-1</name>
</gene>
<gene>
    <name evidence="1" type="primary">chlL-B</name>
    <name type="synonym">chlL-2</name>
</gene>
<keyword id="KW-0004">4Fe-4S</keyword>
<keyword id="KW-0067">ATP-binding</keyword>
<keyword id="KW-0149">Chlorophyll biosynthesis</keyword>
<keyword id="KW-0150">Chloroplast</keyword>
<keyword id="KW-0408">Iron</keyword>
<keyword id="KW-0411">Iron-sulfur</keyword>
<keyword id="KW-0460">Magnesium</keyword>
<keyword id="KW-0479">Metal-binding</keyword>
<keyword id="KW-0547">Nucleotide-binding</keyword>
<keyword id="KW-0560">Oxidoreductase</keyword>
<keyword id="KW-0602">Photosynthesis</keyword>
<keyword id="KW-0934">Plastid</keyword>
<protein>
    <recommendedName>
        <fullName evidence="1">Light-independent protochlorophyllide reductase iron-sulfur ATP-binding protein</fullName>
        <shortName evidence="1">DPOR subunit L</shortName>
        <shortName evidence="1">LI-POR subunit L</shortName>
        <ecNumber evidence="1">1.3.7.7</ecNumber>
    </recommendedName>
</protein>
<geneLocation type="chloroplast"/>
<comment type="function">
    <text evidence="1">Component of the dark-operative protochlorophyllide reductase (DPOR) that uses Mg-ATP and reduced ferredoxin to reduce ring D of protochlorophyllide (Pchlide) to form chlorophyllide a (Chlide). This reaction is light-independent. The L component serves as a unique electron donor to the NB-component of the complex, and binds Mg-ATP.</text>
</comment>
<comment type="catalytic activity">
    <reaction evidence="1">
        <text>chlorophyllide a + oxidized 2[4Fe-4S]-[ferredoxin] + 2 ADP + 2 phosphate = protochlorophyllide a + reduced 2[4Fe-4S]-[ferredoxin] + 2 ATP + 2 H2O</text>
        <dbReference type="Rhea" id="RHEA:28202"/>
        <dbReference type="Rhea" id="RHEA-COMP:10002"/>
        <dbReference type="Rhea" id="RHEA-COMP:10004"/>
        <dbReference type="ChEBI" id="CHEBI:15377"/>
        <dbReference type="ChEBI" id="CHEBI:30616"/>
        <dbReference type="ChEBI" id="CHEBI:33722"/>
        <dbReference type="ChEBI" id="CHEBI:33723"/>
        <dbReference type="ChEBI" id="CHEBI:43474"/>
        <dbReference type="ChEBI" id="CHEBI:83348"/>
        <dbReference type="ChEBI" id="CHEBI:83350"/>
        <dbReference type="ChEBI" id="CHEBI:456216"/>
        <dbReference type="EC" id="1.3.7.7"/>
    </reaction>
</comment>
<comment type="cofactor">
    <cofactor evidence="1">
        <name>[4Fe-4S] cluster</name>
        <dbReference type="ChEBI" id="CHEBI:49883"/>
    </cofactor>
    <text evidence="1">Binds 1 [4Fe-4S] cluster per dimer.</text>
</comment>
<comment type="pathway">
    <text evidence="1">Porphyrin-containing compound metabolism; chlorophyll biosynthesis (light-independent).</text>
</comment>
<comment type="subunit">
    <text evidence="1">Homodimer. Protochlorophyllide reductase is composed of three subunits; ChlL, ChlN and ChlB.</text>
</comment>
<comment type="subcellular location">
    <subcellularLocation>
        <location>Plastid</location>
        <location>Chloroplast</location>
    </subcellularLocation>
</comment>
<comment type="similarity">
    <text evidence="1">Belongs to the NifH/BchL/ChlL family.</text>
</comment>
<accession>Q8LU58</accession>
<evidence type="ECO:0000255" key="1">
    <source>
        <dbReference type="HAMAP-Rule" id="MF_00355"/>
    </source>
</evidence>
<organism>
    <name type="scientific">Chaetosphaeridium globosum</name>
    <name type="common">Charophycean green alga</name>
    <name type="synonym">Herposteiron globosum</name>
    <dbReference type="NCBI Taxonomy" id="96477"/>
    <lineage>
        <taxon>Eukaryota</taxon>
        <taxon>Viridiplantae</taxon>
        <taxon>Streptophyta</taxon>
        <taxon>Coleochaetophyceae</taxon>
        <taxon>Coleochaetales</taxon>
        <taxon>Chaetosphaeridiaceae</taxon>
        <taxon>Chaetosphaeridium</taxon>
    </lineage>
</organism>
<dbReference type="EC" id="1.3.7.7" evidence="1"/>
<dbReference type="EMBL" id="AF494278">
    <property type="protein sequence ID" value="AAM96509.1"/>
    <property type="molecule type" value="Genomic_DNA"/>
</dbReference>
<dbReference type="EMBL" id="AF494278">
    <property type="protein sequence ID" value="AAM96591.1"/>
    <property type="molecule type" value="Genomic_DNA"/>
</dbReference>
<dbReference type="SMR" id="Q8LU58"/>
<dbReference type="UniPathway" id="UPA00670"/>
<dbReference type="GO" id="GO:0009507">
    <property type="term" value="C:chloroplast"/>
    <property type="evidence" value="ECO:0007669"/>
    <property type="project" value="UniProtKB-SubCell"/>
</dbReference>
<dbReference type="GO" id="GO:0051539">
    <property type="term" value="F:4 iron, 4 sulfur cluster binding"/>
    <property type="evidence" value="ECO:0007669"/>
    <property type="project" value="UniProtKB-UniRule"/>
</dbReference>
<dbReference type="GO" id="GO:0005524">
    <property type="term" value="F:ATP binding"/>
    <property type="evidence" value="ECO:0007669"/>
    <property type="project" value="UniProtKB-UniRule"/>
</dbReference>
<dbReference type="GO" id="GO:0046872">
    <property type="term" value="F:metal ion binding"/>
    <property type="evidence" value="ECO:0007669"/>
    <property type="project" value="UniProtKB-KW"/>
</dbReference>
<dbReference type="GO" id="GO:0016730">
    <property type="term" value="F:oxidoreductase activity, acting on iron-sulfur proteins as donors"/>
    <property type="evidence" value="ECO:0007669"/>
    <property type="project" value="InterPro"/>
</dbReference>
<dbReference type="GO" id="GO:0016636">
    <property type="term" value="F:oxidoreductase activity, acting on the CH-CH group of donors, iron-sulfur protein as acceptor"/>
    <property type="evidence" value="ECO:0007669"/>
    <property type="project" value="UniProtKB-UniRule"/>
</dbReference>
<dbReference type="GO" id="GO:0036068">
    <property type="term" value="P:light-independent chlorophyll biosynthetic process"/>
    <property type="evidence" value="ECO:0007669"/>
    <property type="project" value="UniProtKB-UniRule"/>
</dbReference>
<dbReference type="GO" id="GO:0019685">
    <property type="term" value="P:photosynthesis, dark reaction"/>
    <property type="evidence" value="ECO:0007669"/>
    <property type="project" value="InterPro"/>
</dbReference>
<dbReference type="CDD" id="cd02032">
    <property type="entry name" value="Bchl-like"/>
    <property type="match status" value="1"/>
</dbReference>
<dbReference type="Gene3D" id="3.40.50.300">
    <property type="entry name" value="P-loop containing nucleotide triphosphate hydrolases"/>
    <property type="match status" value="1"/>
</dbReference>
<dbReference type="HAMAP" id="MF_00355">
    <property type="entry name" value="ChlL_BchL"/>
    <property type="match status" value="1"/>
</dbReference>
<dbReference type="InterPro" id="IPR030655">
    <property type="entry name" value="NifH/chlL_CS"/>
</dbReference>
<dbReference type="InterPro" id="IPR000392">
    <property type="entry name" value="NifH/frxC"/>
</dbReference>
<dbReference type="InterPro" id="IPR027417">
    <property type="entry name" value="P-loop_NTPase"/>
</dbReference>
<dbReference type="InterPro" id="IPR005971">
    <property type="entry name" value="Protochlorophyllide_ATP-bd"/>
</dbReference>
<dbReference type="NCBIfam" id="TIGR01281">
    <property type="entry name" value="DPOR_bchL"/>
    <property type="match status" value="1"/>
</dbReference>
<dbReference type="PANTHER" id="PTHR42864">
    <property type="entry name" value="LIGHT-INDEPENDENT PROTOCHLOROPHYLLIDE REDUCTASE IRON-SULFUR ATP-BINDING PROTEIN"/>
    <property type="match status" value="1"/>
</dbReference>
<dbReference type="PANTHER" id="PTHR42864:SF2">
    <property type="entry name" value="LIGHT-INDEPENDENT PROTOCHLOROPHYLLIDE REDUCTASE IRON-SULFUR ATP-BINDING PROTEIN"/>
    <property type="match status" value="1"/>
</dbReference>
<dbReference type="Pfam" id="PF00142">
    <property type="entry name" value="Fer4_NifH"/>
    <property type="match status" value="1"/>
</dbReference>
<dbReference type="PIRSF" id="PIRSF000363">
    <property type="entry name" value="Nitrogenase_iron"/>
    <property type="match status" value="1"/>
</dbReference>
<dbReference type="PRINTS" id="PR00091">
    <property type="entry name" value="NITROGNASEII"/>
</dbReference>
<dbReference type="SUPFAM" id="SSF52540">
    <property type="entry name" value="P-loop containing nucleoside triphosphate hydrolases"/>
    <property type="match status" value="1"/>
</dbReference>
<dbReference type="PROSITE" id="PS00746">
    <property type="entry name" value="NIFH_FRXC_1"/>
    <property type="match status" value="1"/>
</dbReference>
<dbReference type="PROSITE" id="PS00692">
    <property type="entry name" value="NIFH_FRXC_2"/>
    <property type="match status" value="1"/>
</dbReference>
<dbReference type="PROSITE" id="PS51026">
    <property type="entry name" value="NIFH_FRXC_3"/>
    <property type="match status" value="1"/>
</dbReference>
<proteinExistence type="inferred from homology"/>
<feature type="chain" id="PRO_0000139552" description="Light-independent protochlorophyllide reductase iron-sulfur ATP-binding protein">
    <location>
        <begin position="1"/>
        <end position="290"/>
    </location>
</feature>
<feature type="binding site" evidence="1">
    <location>
        <begin position="10"/>
        <end position="15"/>
    </location>
    <ligand>
        <name>ATP</name>
        <dbReference type="ChEBI" id="CHEBI:30616"/>
    </ligand>
</feature>
<feature type="binding site" evidence="1">
    <location>
        <position position="14"/>
    </location>
    <ligand>
        <name>Mg(2+)</name>
        <dbReference type="ChEBI" id="CHEBI:18420"/>
    </ligand>
</feature>
<feature type="binding site" evidence="1">
    <location>
        <position position="39"/>
    </location>
    <ligand>
        <name>ATP</name>
        <dbReference type="ChEBI" id="CHEBI:30616"/>
    </ligand>
</feature>
<feature type="binding site" evidence="1">
    <location>
        <position position="95"/>
    </location>
    <ligand>
        <name>[4Fe-4S] cluster</name>
        <dbReference type="ChEBI" id="CHEBI:49883"/>
        <note>ligand shared between dimeric partners</note>
    </ligand>
</feature>
<feature type="binding site" evidence="1">
    <location>
        <position position="129"/>
    </location>
    <ligand>
        <name>[4Fe-4S] cluster</name>
        <dbReference type="ChEBI" id="CHEBI:49883"/>
        <note>ligand shared between dimeric partners</note>
    </ligand>
</feature>
<feature type="binding site" evidence="1">
    <location>
        <begin position="180"/>
        <end position="181"/>
    </location>
    <ligand>
        <name>ATP</name>
        <dbReference type="ChEBI" id="CHEBI:30616"/>
    </ligand>
</feature>